<name>RFWD3_AILME</name>
<reference key="1">
    <citation type="journal article" date="2010" name="Nature">
        <title>The sequence and de novo assembly of the giant panda genome.</title>
        <authorList>
            <person name="Li R."/>
            <person name="Fan W."/>
            <person name="Tian G."/>
            <person name="Zhu H."/>
            <person name="He L."/>
            <person name="Cai J."/>
            <person name="Huang Q."/>
            <person name="Cai Q."/>
            <person name="Li B."/>
            <person name="Bai Y."/>
            <person name="Zhang Z."/>
            <person name="Zhang Y."/>
            <person name="Wang W."/>
            <person name="Li J."/>
            <person name="Wei F."/>
            <person name="Li H."/>
            <person name="Jian M."/>
            <person name="Li J."/>
            <person name="Zhang Z."/>
            <person name="Nielsen R."/>
            <person name="Li D."/>
            <person name="Gu W."/>
            <person name="Yang Z."/>
            <person name="Xuan Z."/>
            <person name="Ryder O.A."/>
            <person name="Leung F.C."/>
            <person name="Zhou Y."/>
            <person name="Cao J."/>
            <person name="Sun X."/>
            <person name="Fu Y."/>
            <person name="Fang X."/>
            <person name="Guo X."/>
            <person name="Wang B."/>
            <person name="Hou R."/>
            <person name="Shen F."/>
            <person name="Mu B."/>
            <person name="Ni P."/>
            <person name="Lin R."/>
            <person name="Qian W."/>
            <person name="Wang G."/>
            <person name="Yu C."/>
            <person name="Nie W."/>
            <person name="Wang J."/>
            <person name="Wu Z."/>
            <person name="Liang H."/>
            <person name="Min J."/>
            <person name="Wu Q."/>
            <person name="Cheng S."/>
            <person name="Ruan J."/>
            <person name="Wang M."/>
            <person name="Shi Z."/>
            <person name="Wen M."/>
            <person name="Liu B."/>
            <person name="Ren X."/>
            <person name="Zheng H."/>
            <person name="Dong D."/>
            <person name="Cook K."/>
            <person name="Shan G."/>
            <person name="Zhang H."/>
            <person name="Kosiol C."/>
            <person name="Xie X."/>
            <person name="Lu Z."/>
            <person name="Zheng H."/>
            <person name="Li Y."/>
            <person name="Steiner C.C."/>
            <person name="Lam T.T."/>
            <person name="Lin S."/>
            <person name="Zhang Q."/>
            <person name="Li G."/>
            <person name="Tian J."/>
            <person name="Gong T."/>
            <person name="Liu H."/>
            <person name="Zhang D."/>
            <person name="Fang L."/>
            <person name="Ye C."/>
            <person name="Zhang J."/>
            <person name="Hu W."/>
            <person name="Xu A."/>
            <person name="Ren Y."/>
            <person name="Zhang G."/>
            <person name="Bruford M.W."/>
            <person name="Li Q."/>
            <person name="Ma L."/>
            <person name="Guo Y."/>
            <person name="An N."/>
            <person name="Hu Y."/>
            <person name="Zheng Y."/>
            <person name="Shi Y."/>
            <person name="Li Z."/>
            <person name="Liu Q."/>
            <person name="Chen Y."/>
            <person name="Zhao J."/>
            <person name="Qu N."/>
            <person name="Zhao S."/>
            <person name="Tian F."/>
            <person name="Wang X."/>
            <person name="Wang H."/>
            <person name="Xu L."/>
            <person name="Liu X."/>
            <person name="Vinar T."/>
            <person name="Wang Y."/>
            <person name="Lam T.W."/>
            <person name="Yiu S.M."/>
            <person name="Liu S."/>
            <person name="Zhang H."/>
            <person name="Li D."/>
            <person name="Huang Y."/>
            <person name="Wang X."/>
            <person name="Yang G."/>
            <person name="Jiang Z."/>
            <person name="Wang J."/>
            <person name="Qin N."/>
            <person name="Li L."/>
            <person name="Li J."/>
            <person name="Bolund L."/>
            <person name="Kristiansen K."/>
            <person name="Wong G.K."/>
            <person name="Olson M."/>
            <person name="Zhang X."/>
            <person name="Li S."/>
            <person name="Yang H."/>
            <person name="Wang J."/>
            <person name="Wang J."/>
        </authorList>
    </citation>
    <scope>NUCLEOTIDE SEQUENCE [LARGE SCALE GENOMIC DNA]</scope>
</reference>
<proteinExistence type="inferred from homology"/>
<evidence type="ECO:0000250" key="1">
    <source>
        <dbReference type="UniProtKB" id="Q6PCD5"/>
    </source>
</evidence>
<evidence type="ECO:0000255" key="2"/>
<evidence type="ECO:0000255" key="3">
    <source>
        <dbReference type="PROSITE-ProRule" id="PRU00175"/>
    </source>
</evidence>
<evidence type="ECO:0000256" key="4">
    <source>
        <dbReference type="SAM" id="MobiDB-lite"/>
    </source>
</evidence>
<comment type="function">
    <text evidence="1">E3 ubiquitin-protein ligase required for the repair of DNA interstrand cross-links (ICL) in response to DNA damage. Plays a key role in RPA-mediated DNA damage signaling and repair. Acts by mediating ubiquitination of the RPA complex (RPA1, RPA2 and RPA3 subunits) and RAD51 at stalled replication forks, leading to remove them from DNA damage sites and promote homologous recombination. Also mediates the ubiquitination of p53/TP53 in the late response to DNA damage, and acts as a positive regulator of p53/TP53 stability, thereby regulating the G1/S DNA damage checkpoint. May act by catalyzing the formation of short polyubiquitin chains on p53/TP53 that are not targeted to the proteasome. In response to ionizing radiation, interacts with MDM2 and enhances p53/TP53 ubiquitination, possibly by restricting MDM2 from extending polyubiquitin chains on ubiquitinated p53/TP53. Required to translesion DNA synthesis across DNA-protein cross-link adducts by catalyzing ubiquitination of proteins on single-stranded DNA (ssDNA).</text>
</comment>
<comment type="catalytic activity">
    <reaction evidence="1">
        <text>S-ubiquitinyl-[E2 ubiquitin-conjugating enzyme]-L-cysteine + [acceptor protein]-L-lysine = [E2 ubiquitin-conjugating enzyme]-L-cysteine + N(6)-ubiquitinyl-[acceptor protein]-L-lysine.</text>
        <dbReference type="EC" id="2.3.2.27"/>
    </reaction>
</comment>
<comment type="pathway">
    <text evidence="1">Protein modification; protein ubiquitination.</text>
</comment>
<comment type="subunit">
    <text evidence="1">Interacts with MDM2 and p53/TP53. Binds to the RPA complex via direct interaction with RPA2. Interacts with RAD51.</text>
</comment>
<comment type="subcellular location">
    <subcellularLocation>
        <location evidence="1">Nucleus</location>
    </subcellularLocation>
    <subcellularLocation>
        <location evidence="1">Nucleus</location>
        <location evidence="1">PML body</location>
    </subcellularLocation>
    <subcellularLocation>
        <location evidence="1">Cytoplasm</location>
    </subcellularLocation>
    <text evidence="1">In undamaged cells, found both in the cytoplasm and in the nucleus, partially associated with PML nuclear bodies. In response to replication block, such as that caused by hydroxyurea treatment, or to DNA damage caused by ionizing radiations or doxorubicin, recruited to the nucleus, to stalled replication forks or to sites of DNA repair. This recruitment depends upon RPA2.</text>
</comment>
<comment type="domain">
    <text evidence="1">The coiled coil domain may be involved in RPA2-binding.</text>
</comment>
<comment type="PTM">
    <text evidence="1">Phosphorylated at Ser-46 and Ser-63 upon DNA damage by ATM or ATR. ATM phosphorylation occurs at early times upon DNA damage, while ATR is the major kinase at later times. Phosphorylation by ATM and ATR is required to stabilize p53/TP53. Part of the phosphorylation depends upon RPA2 presence.</text>
</comment>
<keyword id="KW-0175">Coiled coil</keyword>
<keyword id="KW-0963">Cytoplasm</keyword>
<keyword id="KW-0227">DNA damage</keyword>
<keyword id="KW-0234">DNA repair</keyword>
<keyword id="KW-0479">Metal-binding</keyword>
<keyword id="KW-0539">Nucleus</keyword>
<keyword id="KW-0597">Phosphoprotein</keyword>
<keyword id="KW-1185">Reference proteome</keyword>
<keyword id="KW-0677">Repeat</keyword>
<keyword id="KW-0808">Transferase</keyword>
<keyword id="KW-0833">Ubl conjugation pathway</keyword>
<keyword id="KW-0853">WD repeat</keyword>
<keyword id="KW-0862">Zinc</keyword>
<keyword id="KW-0863">Zinc-finger</keyword>
<feature type="chain" id="PRO_0000394253" description="E3 ubiquitin-protein ligase RFWD3">
    <location>
        <begin position="1"/>
        <end position="773"/>
    </location>
</feature>
<feature type="repeat" description="WD 1">
    <location>
        <begin position="494"/>
        <end position="536"/>
    </location>
</feature>
<feature type="repeat" description="WD 2">
    <location>
        <begin position="538"/>
        <end position="576"/>
    </location>
</feature>
<feature type="repeat" description="WD 3">
    <location>
        <begin position="582"/>
        <end position="627"/>
    </location>
</feature>
<feature type="zinc finger region" description="RING-type; degenerate" evidence="3">
    <location>
        <begin position="287"/>
        <end position="331"/>
    </location>
</feature>
<feature type="region of interest" description="Disordered" evidence="4">
    <location>
        <begin position="18"/>
        <end position="67"/>
    </location>
</feature>
<feature type="region of interest" description="Disordered" evidence="4">
    <location>
        <begin position="92"/>
        <end position="117"/>
    </location>
</feature>
<feature type="region of interest" description="Disordered" evidence="4">
    <location>
        <begin position="139"/>
        <end position="230"/>
    </location>
</feature>
<feature type="region of interest" description="Disordered" evidence="4">
    <location>
        <begin position="259"/>
        <end position="279"/>
    </location>
</feature>
<feature type="coiled-coil region" evidence="2">
    <location>
        <begin position="361"/>
        <end position="403"/>
    </location>
</feature>
<feature type="compositionally biased region" description="Low complexity" evidence="4">
    <location>
        <begin position="50"/>
        <end position="59"/>
    </location>
</feature>
<feature type="compositionally biased region" description="Basic residues" evidence="4">
    <location>
        <begin position="151"/>
        <end position="164"/>
    </location>
</feature>
<feature type="compositionally biased region" description="Polar residues" evidence="4">
    <location>
        <begin position="186"/>
        <end position="205"/>
    </location>
</feature>
<feature type="compositionally biased region" description="Low complexity" evidence="4">
    <location>
        <begin position="207"/>
        <end position="221"/>
    </location>
</feature>
<feature type="compositionally biased region" description="Polar residues" evidence="4">
    <location>
        <begin position="263"/>
        <end position="273"/>
    </location>
</feature>
<feature type="modified residue" description="Phosphoserine; by ATM and ATR" evidence="1">
    <location>
        <position position="47"/>
    </location>
</feature>
<feature type="modified residue" description="Phosphoserine; by ATM and ATR" evidence="1">
    <location>
        <position position="64"/>
    </location>
</feature>
<gene>
    <name type="primary">RFWD3</name>
    <name type="synonym">RNF201</name>
    <name type="ORF">PANDA_016934</name>
</gene>
<organism>
    <name type="scientific">Ailuropoda melanoleuca</name>
    <name type="common">Giant panda</name>
    <dbReference type="NCBI Taxonomy" id="9646"/>
    <lineage>
        <taxon>Eukaryota</taxon>
        <taxon>Metazoa</taxon>
        <taxon>Chordata</taxon>
        <taxon>Craniata</taxon>
        <taxon>Vertebrata</taxon>
        <taxon>Euteleostomi</taxon>
        <taxon>Mammalia</taxon>
        <taxon>Eutheria</taxon>
        <taxon>Laurasiatheria</taxon>
        <taxon>Carnivora</taxon>
        <taxon>Caniformia</taxon>
        <taxon>Ursidae</taxon>
        <taxon>Ailuropoda</taxon>
    </lineage>
</organism>
<protein>
    <recommendedName>
        <fullName>E3 ubiquitin-protein ligase RFWD3</fullName>
        <ecNumber evidence="1">2.3.2.27</ecNumber>
    </recommendedName>
    <alternativeName>
        <fullName>RING finger and WD repeat domain-containing protein 3</fullName>
    </alternativeName>
    <alternativeName>
        <fullName>RING finger protein 201</fullName>
    </alternativeName>
</protein>
<accession>D2HWM5</accession>
<sequence>MAQEAMEYNVDEQLEHRVAEQPVPAEVVSTQGGPPPLQPLPTEVVSSQGAPPLLQPAPAEGTSSQVGPHLLQPAAQLSVDLTEEVELLGEDRVENINPGASEEHRQPSRVNRPIPVSSLDSMNSFISGLQRLHGMLEFLRPPSDHNVGPVRSRRRRGSASRRSRTVGSQRTDSARSRAPLDAYFQVSRTQPHLPSMSQDSETRNPVSEDLQVSSSSSSDSESSAEYEEVVVQAEDTRAVVSEEQGGTAAEQEVTCVGGGETLPKQSPQKTNPLLPSVSKDDEEGDTCTICFEHWTNAGDHRLSALRCGHLFGYKCISKWLKGQARKCPQCNKKAKHSDIVVLYARTLRALDTSEHERMKSSLLKEQMLRKQAELESAQCRLQLQVLTDECSKLHSRVQDLQKLTVQHRDQISQSPSGSQARSLNCLPSSQNQRKYHFQKTFTVSPTGNCRIMTYCDALSCLVVSQPSPQASFLPGFGVKMLSTANMKSSQYVPMHGKQIRGLAFSSRSKGLLLSASLDSTVKLTSLETNTVVQTYNAGRPVWSCCWCLDESNHIYAGLVNGSILVYDLRNTSSHIQELVPQKARCPLVSLSYIPRAASAAFPYGGVLAGTLENASFWELKMGFSHWPHVLPMEPGGCVDFQTESSTRHCLVTYRPDKNHNTLRSVLMEMSYKLNDAGEPVCSCRPVQTFLGGPTCKLLTKSAIFQNPENDGSILVCTGDEASNSALLWDAGSGSLLQELQADQPVLDICPFEANHSSCLATLTEKMVHIYRWE</sequence>
<dbReference type="EC" id="2.3.2.27" evidence="1"/>
<dbReference type="EMBL" id="GL193557">
    <property type="protein sequence ID" value="EFB22419.1"/>
    <property type="molecule type" value="Genomic_DNA"/>
</dbReference>
<dbReference type="RefSeq" id="XP_011232989.1">
    <property type="nucleotide sequence ID" value="XM_011234687.3"/>
</dbReference>
<dbReference type="RefSeq" id="XP_034528805.1">
    <property type="nucleotide sequence ID" value="XM_034672914.1"/>
</dbReference>
<dbReference type="SMR" id="D2HWM5"/>
<dbReference type="STRING" id="9646.ENSAMEP00000001391"/>
<dbReference type="Ensembl" id="ENSAMET00000001443.2">
    <property type="protein sequence ID" value="ENSAMEP00000001391.2"/>
    <property type="gene ID" value="ENSAMEG00000001323.2"/>
</dbReference>
<dbReference type="GeneID" id="100478259"/>
<dbReference type="KEGG" id="aml:100478259"/>
<dbReference type="CTD" id="55159"/>
<dbReference type="eggNOG" id="KOG1645">
    <property type="taxonomic scope" value="Eukaryota"/>
</dbReference>
<dbReference type="HOGENOM" id="CLU_021009_1_0_1"/>
<dbReference type="InParanoid" id="D2HWM5"/>
<dbReference type="OrthoDB" id="5600418at2759"/>
<dbReference type="UniPathway" id="UPA00143"/>
<dbReference type="Proteomes" id="UP000008912">
    <property type="component" value="Unassembled WGS sequence"/>
</dbReference>
<dbReference type="GO" id="GO:0005737">
    <property type="term" value="C:cytoplasm"/>
    <property type="evidence" value="ECO:0007669"/>
    <property type="project" value="UniProtKB-SubCell"/>
</dbReference>
<dbReference type="GO" id="GO:0005634">
    <property type="term" value="C:nucleus"/>
    <property type="evidence" value="ECO:0000250"/>
    <property type="project" value="UniProtKB"/>
</dbReference>
<dbReference type="GO" id="GO:0016605">
    <property type="term" value="C:PML body"/>
    <property type="evidence" value="ECO:0007669"/>
    <property type="project" value="UniProtKB-SubCell"/>
</dbReference>
<dbReference type="GO" id="GO:0090734">
    <property type="term" value="C:site of DNA damage"/>
    <property type="evidence" value="ECO:0000250"/>
    <property type="project" value="UniProtKB"/>
</dbReference>
<dbReference type="GO" id="GO:0035861">
    <property type="term" value="C:site of double-strand break"/>
    <property type="evidence" value="ECO:0007669"/>
    <property type="project" value="Ensembl"/>
</dbReference>
<dbReference type="GO" id="GO:0097371">
    <property type="term" value="F:MDM2/MDM4 family protein binding"/>
    <property type="evidence" value="ECO:0000250"/>
    <property type="project" value="UniProtKB"/>
</dbReference>
<dbReference type="GO" id="GO:0002039">
    <property type="term" value="F:p53 binding"/>
    <property type="evidence" value="ECO:0000250"/>
    <property type="project" value="UniProtKB"/>
</dbReference>
<dbReference type="GO" id="GO:0061630">
    <property type="term" value="F:ubiquitin protein ligase activity"/>
    <property type="evidence" value="ECO:0000250"/>
    <property type="project" value="UniProtKB"/>
</dbReference>
<dbReference type="GO" id="GO:0008270">
    <property type="term" value="F:zinc ion binding"/>
    <property type="evidence" value="ECO:0007669"/>
    <property type="project" value="UniProtKB-KW"/>
</dbReference>
<dbReference type="GO" id="GO:0006974">
    <property type="term" value="P:DNA damage response"/>
    <property type="evidence" value="ECO:0000250"/>
    <property type="project" value="UniProtKB"/>
</dbReference>
<dbReference type="GO" id="GO:0000724">
    <property type="term" value="P:double-strand break repair via homologous recombination"/>
    <property type="evidence" value="ECO:0000250"/>
    <property type="project" value="UniProtKB"/>
</dbReference>
<dbReference type="GO" id="GO:0036297">
    <property type="term" value="P:interstrand cross-link repair"/>
    <property type="evidence" value="ECO:0000250"/>
    <property type="project" value="UniProtKB"/>
</dbReference>
<dbReference type="GO" id="GO:0031571">
    <property type="term" value="P:mitotic G1 DNA damage checkpoint signaling"/>
    <property type="evidence" value="ECO:0000250"/>
    <property type="project" value="UniProtKB"/>
</dbReference>
<dbReference type="GO" id="GO:0016567">
    <property type="term" value="P:protein ubiquitination"/>
    <property type="evidence" value="ECO:0000250"/>
    <property type="project" value="UniProtKB"/>
</dbReference>
<dbReference type="GO" id="GO:2000001">
    <property type="term" value="P:regulation of DNA damage checkpoint"/>
    <property type="evidence" value="ECO:0007669"/>
    <property type="project" value="Ensembl"/>
</dbReference>
<dbReference type="GO" id="GO:0031297">
    <property type="term" value="P:replication fork processing"/>
    <property type="evidence" value="ECO:0000250"/>
    <property type="project" value="UniProtKB"/>
</dbReference>
<dbReference type="GO" id="GO:0010212">
    <property type="term" value="P:response to ionizing radiation"/>
    <property type="evidence" value="ECO:0000250"/>
    <property type="project" value="UniProtKB"/>
</dbReference>
<dbReference type="CDD" id="cd16450">
    <property type="entry name" value="mRING-C3HGC3_RFWD3"/>
    <property type="match status" value="1"/>
</dbReference>
<dbReference type="FunFam" id="3.30.40.10:FF:000832">
    <property type="entry name" value="E3 ubiquitin-protein ligase RFWD3"/>
    <property type="match status" value="1"/>
</dbReference>
<dbReference type="FunFam" id="2.130.10.10:FF:000598">
    <property type="entry name" value="E3 ubiquitin-protein ligase RFWD3 isoform X2"/>
    <property type="match status" value="1"/>
</dbReference>
<dbReference type="Gene3D" id="2.130.10.10">
    <property type="entry name" value="YVTN repeat-like/Quinoprotein amine dehydrogenase"/>
    <property type="match status" value="1"/>
</dbReference>
<dbReference type="Gene3D" id="3.30.40.10">
    <property type="entry name" value="Zinc/RING finger domain, C3HC4 (zinc finger)"/>
    <property type="match status" value="1"/>
</dbReference>
<dbReference type="InterPro" id="IPR037381">
    <property type="entry name" value="RFWD3"/>
</dbReference>
<dbReference type="InterPro" id="IPR015943">
    <property type="entry name" value="WD40/YVTN_repeat-like_dom_sf"/>
</dbReference>
<dbReference type="InterPro" id="IPR036322">
    <property type="entry name" value="WD40_repeat_dom_sf"/>
</dbReference>
<dbReference type="InterPro" id="IPR056527">
    <property type="entry name" value="WD40_RFWD3"/>
</dbReference>
<dbReference type="InterPro" id="IPR001680">
    <property type="entry name" value="WD40_rpt"/>
</dbReference>
<dbReference type="InterPro" id="IPR001841">
    <property type="entry name" value="Znf_RING"/>
</dbReference>
<dbReference type="InterPro" id="IPR013083">
    <property type="entry name" value="Znf_RING/FYVE/PHD"/>
</dbReference>
<dbReference type="PANTHER" id="PTHR16047:SF7">
    <property type="entry name" value="E3 UBIQUITIN-PROTEIN LIGASE RFWD3"/>
    <property type="match status" value="1"/>
</dbReference>
<dbReference type="PANTHER" id="PTHR16047">
    <property type="entry name" value="RFWD3 PROTEIN"/>
    <property type="match status" value="1"/>
</dbReference>
<dbReference type="Pfam" id="PF23419">
    <property type="entry name" value="WD40_RFWD3"/>
    <property type="match status" value="1"/>
</dbReference>
<dbReference type="Pfam" id="PF13639">
    <property type="entry name" value="zf-RING_2"/>
    <property type="match status" value="1"/>
</dbReference>
<dbReference type="SMART" id="SM00184">
    <property type="entry name" value="RING"/>
    <property type="match status" value="1"/>
</dbReference>
<dbReference type="SMART" id="SM00320">
    <property type="entry name" value="WD40"/>
    <property type="match status" value="2"/>
</dbReference>
<dbReference type="SUPFAM" id="SSF57850">
    <property type="entry name" value="RING/U-box"/>
    <property type="match status" value="1"/>
</dbReference>
<dbReference type="SUPFAM" id="SSF50978">
    <property type="entry name" value="WD40 repeat-like"/>
    <property type="match status" value="1"/>
</dbReference>
<dbReference type="PROSITE" id="PS50089">
    <property type="entry name" value="ZF_RING_2"/>
    <property type="match status" value="1"/>
</dbReference>